<proteinExistence type="evidence at protein level"/>
<feature type="chain" id="PRO_0000447137" description="Putative translational regulatory protein BaxL">
    <location>
        <begin position="1"/>
        <end position="8"/>
    </location>
</feature>
<protein>
    <recommendedName>
        <fullName evidence="3">Putative translational regulatory protein BaxL</fullName>
    </recommendedName>
</protein>
<accession>P0DSH2</accession>
<accession>A0A7H2C7A0</accession>
<comment type="function">
    <text evidence="1">May serve a regulatory role in expression of downstream gene baxA; in a baxL-baxA-lacZ fusion mutation of the start codon to a stop codon in baxL increases expression of beta-galactosidase.</text>
</comment>
<comment type="induction">
    <text evidence="1">Expressed in both exponential and stationary phase in rich medium; expression is considerably higher during exponential phase (at protein level).</text>
</comment>
<comment type="miscellaneous">
    <text evidence="1">This gene lies upstream of and overlaps baxA on the same strand in another reading frame.</text>
</comment>
<gene>
    <name evidence="2" type="primary">baxL</name>
    <name evidence="4" type="ordered locus">b4794</name>
</gene>
<keyword id="KW-1185">Reference proteome</keyword>
<keyword id="KW-0810">Translation regulation</keyword>
<name>BAXL_ECOLI</name>
<dbReference type="EMBL" id="U00096">
    <property type="protein sequence ID" value="QNV50547.1"/>
    <property type="molecule type" value="Genomic_DNA"/>
</dbReference>
<dbReference type="InParanoid" id="P0DSH2"/>
<dbReference type="BioCyc" id="EcoCyc:MONOMER0-4506"/>
<dbReference type="Proteomes" id="UP000000625">
    <property type="component" value="Chromosome"/>
</dbReference>
<dbReference type="GO" id="GO:0006417">
    <property type="term" value="P:regulation of translation"/>
    <property type="evidence" value="ECO:0007669"/>
    <property type="project" value="UniProtKB-KW"/>
</dbReference>
<reference key="1">
    <citation type="journal article" date="1997" name="Science">
        <title>The complete genome sequence of Escherichia coli K-12.</title>
        <authorList>
            <person name="Blattner F.R."/>
            <person name="Plunkett G. III"/>
            <person name="Bloch C.A."/>
            <person name="Perna N.T."/>
            <person name="Burland V."/>
            <person name="Riley M."/>
            <person name="Collado-Vides J."/>
            <person name="Glasner J.D."/>
            <person name="Rode C.K."/>
            <person name="Mayhew G.F."/>
            <person name="Gregor J."/>
            <person name="Davis N.W."/>
            <person name="Kirkpatrick H.A."/>
            <person name="Goeden M.A."/>
            <person name="Rose D.J."/>
            <person name="Mau B."/>
            <person name="Shao Y."/>
        </authorList>
    </citation>
    <scope>NUCLEOTIDE SEQUENCE [LARGE SCALE GENOMIC DNA]</scope>
    <source>
        <strain>K12 / MG1655 / ATCC 47076</strain>
    </source>
</reference>
<reference key="2">
    <citation type="journal article" date="2019" name="MBio">
        <title>Identifying small proteins by ribosome profiling with stalled initiation complexes.</title>
        <authorList>
            <person name="Weaver J."/>
            <person name="Mohammad F."/>
            <person name="Buskirk A.R."/>
            <person name="Storz G."/>
        </authorList>
    </citation>
    <scope>POSSIBLE FUNCTION</scope>
    <scope>IDENTIFICATION</scope>
    <scope>INDUCTION</scope>
    <source>
        <strain>K12 / MG1655 / ATCC 47076</strain>
    </source>
</reference>
<organism>
    <name type="scientific">Escherichia coli (strain K12)</name>
    <dbReference type="NCBI Taxonomy" id="83333"/>
    <lineage>
        <taxon>Bacteria</taxon>
        <taxon>Pseudomonadati</taxon>
        <taxon>Pseudomonadota</taxon>
        <taxon>Gammaproteobacteria</taxon>
        <taxon>Enterobacterales</taxon>
        <taxon>Enterobacteriaceae</taxon>
        <taxon>Escherichia</taxon>
    </lineage>
</organism>
<sequence length="8" mass="951">MIKSDQET</sequence>
<evidence type="ECO:0000269" key="1">
    <source>
    </source>
</evidence>
<evidence type="ECO:0000303" key="2">
    <source>
    </source>
</evidence>
<evidence type="ECO:0000305" key="3"/>
<evidence type="ECO:0000312" key="4">
    <source>
        <dbReference type="EMBL" id="QNV50547.1"/>
    </source>
</evidence>